<organism>
    <name type="scientific">Homo sapiens</name>
    <name type="common">Human</name>
    <dbReference type="NCBI Taxonomy" id="9606"/>
    <lineage>
        <taxon>Eukaryota</taxon>
        <taxon>Metazoa</taxon>
        <taxon>Chordata</taxon>
        <taxon>Craniata</taxon>
        <taxon>Vertebrata</taxon>
        <taxon>Euteleostomi</taxon>
        <taxon>Mammalia</taxon>
        <taxon>Eutheria</taxon>
        <taxon>Euarchontoglires</taxon>
        <taxon>Primates</taxon>
        <taxon>Haplorrhini</taxon>
        <taxon>Catarrhini</taxon>
        <taxon>Hominidae</taxon>
        <taxon>Homo</taxon>
    </lineage>
</organism>
<proteinExistence type="evidence at protein level"/>
<evidence type="ECO:0000303" key="1">
    <source>
    </source>
</evidence>
<evidence type="ECO:0000303" key="2">
    <source>
    </source>
</evidence>
<evidence type="ECO:0000303" key="3">
    <source>
    </source>
</evidence>
<evidence type="ECO:0000305" key="4"/>
<gene>
    <name type="primary">TTC13</name>
    <name type="ORF">PSEC0076</name>
</gene>
<name>TTC13_HUMAN</name>
<reference key="1">
    <citation type="journal article" date="2005" name="DNA Res.">
        <title>Signal sequence and keyword trap in silico for selection of full-length human cDNAs encoding secretion or membrane proteins from oligo-capped cDNA libraries.</title>
        <authorList>
            <person name="Otsuki T."/>
            <person name="Ota T."/>
            <person name="Nishikawa T."/>
            <person name="Hayashi K."/>
            <person name="Suzuki Y."/>
            <person name="Yamamoto J."/>
            <person name="Wakamatsu A."/>
            <person name="Kimura K."/>
            <person name="Sakamoto K."/>
            <person name="Hatano N."/>
            <person name="Kawai Y."/>
            <person name="Ishii S."/>
            <person name="Saito K."/>
            <person name="Kojima S."/>
            <person name="Sugiyama T."/>
            <person name="Ono T."/>
            <person name="Okano K."/>
            <person name="Yoshikawa Y."/>
            <person name="Aotsuka S."/>
            <person name="Sasaki N."/>
            <person name="Hattori A."/>
            <person name="Okumura K."/>
            <person name="Nagai K."/>
            <person name="Sugano S."/>
            <person name="Isogai T."/>
        </authorList>
    </citation>
    <scope>NUCLEOTIDE SEQUENCE [LARGE SCALE MRNA] (ISOFORMS 1 AND 2)</scope>
    <source>
        <tissue>Teratocarcinoma</tissue>
    </source>
</reference>
<reference key="2">
    <citation type="journal article" date="2006" name="Nature">
        <title>The DNA sequence and biological annotation of human chromosome 1.</title>
        <authorList>
            <person name="Gregory S.G."/>
            <person name="Barlow K.F."/>
            <person name="McLay K.E."/>
            <person name="Kaul R."/>
            <person name="Swarbreck D."/>
            <person name="Dunham A."/>
            <person name="Scott C.E."/>
            <person name="Howe K.L."/>
            <person name="Woodfine K."/>
            <person name="Spencer C.C.A."/>
            <person name="Jones M.C."/>
            <person name="Gillson C."/>
            <person name="Searle S."/>
            <person name="Zhou Y."/>
            <person name="Kokocinski F."/>
            <person name="McDonald L."/>
            <person name="Evans R."/>
            <person name="Phillips K."/>
            <person name="Atkinson A."/>
            <person name="Cooper R."/>
            <person name="Jones C."/>
            <person name="Hall R.E."/>
            <person name="Andrews T.D."/>
            <person name="Lloyd C."/>
            <person name="Ainscough R."/>
            <person name="Almeida J.P."/>
            <person name="Ambrose K.D."/>
            <person name="Anderson F."/>
            <person name="Andrew R.W."/>
            <person name="Ashwell R.I.S."/>
            <person name="Aubin K."/>
            <person name="Babbage A.K."/>
            <person name="Bagguley C.L."/>
            <person name="Bailey J."/>
            <person name="Beasley H."/>
            <person name="Bethel G."/>
            <person name="Bird C.P."/>
            <person name="Bray-Allen S."/>
            <person name="Brown J.Y."/>
            <person name="Brown A.J."/>
            <person name="Buckley D."/>
            <person name="Burton J."/>
            <person name="Bye J."/>
            <person name="Carder C."/>
            <person name="Chapman J.C."/>
            <person name="Clark S.Y."/>
            <person name="Clarke G."/>
            <person name="Clee C."/>
            <person name="Cobley V."/>
            <person name="Collier R.E."/>
            <person name="Corby N."/>
            <person name="Coville G.J."/>
            <person name="Davies J."/>
            <person name="Deadman R."/>
            <person name="Dunn M."/>
            <person name="Earthrowl M."/>
            <person name="Ellington A.G."/>
            <person name="Errington H."/>
            <person name="Frankish A."/>
            <person name="Frankland J."/>
            <person name="French L."/>
            <person name="Garner P."/>
            <person name="Garnett J."/>
            <person name="Gay L."/>
            <person name="Ghori M.R.J."/>
            <person name="Gibson R."/>
            <person name="Gilby L.M."/>
            <person name="Gillett W."/>
            <person name="Glithero R.J."/>
            <person name="Grafham D.V."/>
            <person name="Griffiths C."/>
            <person name="Griffiths-Jones S."/>
            <person name="Grocock R."/>
            <person name="Hammond S."/>
            <person name="Harrison E.S.I."/>
            <person name="Hart E."/>
            <person name="Haugen E."/>
            <person name="Heath P.D."/>
            <person name="Holmes S."/>
            <person name="Holt K."/>
            <person name="Howden P.J."/>
            <person name="Hunt A.R."/>
            <person name="Hunt S.E."/>
            <person name="Hunter G."/>
            <person name="Isherwood J."/>
            <person name="James R."/>
            <person name="Johnson C."/>
            <person name="Johnson D."/>
            <person name="Joy A."/>
            <person name="Kay M."/>
            <person name="Kershaw J.K."/>
            <person name="Kibukawa M."/>
            <person name="Kimberley A.M."/>
            <person name="King A."/>
            <person name="Knights A.J."/>
            <person name="Lad H."/>
            <person name="Laird G."/>
            <person name="Lawlor S."/>
            <person name="Leongamornlert D.A."/>
            <person name="Lloyd D.M."/>
            <person name="Loveland J."/>
            <person name="Lovell J."/>
            <person name="Lush M.J."/>
            <person name="Lyne R."/>
            <person name="Martin S."/>
            <person name="Mashreghi-Mohammadi M."/>
            <person name="Matthews L."/>
            <person name="Matthews N.S.W."/>
            <person name="McLaren S."/>
            <person name="Milne S."/>
            <person name="Mistry S."/>
            <person name="Moore M.J.F."/>
            <person name="Nickerson T."/>
            <person name="O'Dell C.N."/>
            <person name="Oliver K."/>
            <person name="Palmeiri A."/>
            <person name="Palmer S.A."/>
            <person name="Parker A."/>
            <person name="Patel D."/>
            <person name="Pearce A.V."/>
            <person name="Peck A.I."/>
            <person name="Pelan S."/>
            <person name="Phelps K."/>
            <person name="Phillimore B.J."/>
            <person name="Plumb R."/>
            <person name="Rajan J."/>
            <person name="Raymond C."/>
            <person name="Rouse G."/>
            <person name="Saenphimmachak C."/>
            <person name="Sehra H.K."/>
            <person name="Sheridan E."/>
            <person name="Shownkeen R."/>
            <person name="Sims S."/>
            <person name="Skuce C.D."/>
            <person name="Smith M."/>
            <person name="Steward C."/>
            <person name="Subramanian S."/>
            <person name="Sycamore N."/>
            <person name="Tracey A."/>
            <person name="Tromans A."/>
            <person name="Van Helmond Z."/>
            <person name="Wall M."/>
            <person name="Wallis J.M."/>
            <person name="White S."/>
            <person name="Whitehead S.L."/>
            <person name="Wilkinson J.E."/>
            <person name="Willey D.L."/>
            <person name="Williams H."/>
            <person name="Wilming L."/>
            <person name="Wray P.W."/>
            <person name="Wu Z."/>
            <person name="Coulson A."/>
            <person name="Vaudin M."/>
            <person name="Sulston J.E."/>
            <person name="Durbin R.M."/>
            <person name="Hubbard T."/>
            <person name="Wooster R."/>
            <person name="Dunham I."/>
            <person name="Carter N.P."/>
            <person name="McVean G."/>
            <person name="Ross M.T."/>
            <person name="Harrow J."/>
            <person name="Olson M.V."/>
            <person name="Beck S."/>
            <person name="Rogers J."/>
            <person name="Bentley D.R."/>
        </authorList>
    </citation>
    <scope>NUCLEOTIDE SEQUENCE [LARGE SCALE GENOMIC DNA]</scope>
</reference>
<reference key="3">
    <citation type="journal article" date="2007" name="BMC Genomics">
        <title>The full-ORF clone resource of the German cDNA consortium.</title>
        <authorList>
            <person name="Bechtel S."/>
            <person name="Rosenfelder H."/>
            <person name="Duda A."/>
            <person name="Schmidt C.P."/>
            <person name="Ernst U."/>
            <person name="Wellenreuther R."/>
            <person name="Mehrle A."/>
            <person name="Schuster C."/>
            <person name="Bahr A."/>
            <person name="Bloecker H."/>
            <person name="Heubner D."/>
            <person name="Hoerlein A."/>
            <person name="Michel G."/>
            <person name="Wedler H."/>
            <person name="Koehrer K."/>
            <person name="Ottenwaelder B."/>
            <person name="Poustka A."/>
            <person name="Wiemann S."/>
            <person name="Schupp I."/>
        </authorList>
    </citation>
    <scope>NUCLEOTIDE SEQUENCE [LARGE SCALE MRNA] OF 331-860 (ISOFORM 2)</scope>
    <source>
        <tissue>Brain</tissue>
    </source>
</reference>
<reference key="4">
    <citation type="journal article" date="2004" name="Genome Res.">
        <title>The status, quality, and expansion of the NIH full-length cDNA project: the Mammalian Gene Collection (MGC).</title>
        <authorList>
            <consortium name="The MGC Project Team"/>
        </authorList>
    </citation>
    <scope>NUCLEOTIDE SEQUENCE [LARGE SCALE MRNA] OF 358-860 (ISOFORM 2)</scope>
    <source>
        <tissue>Skin</tissue>
    </source>
</reference>
<keyword id="KW-0025">Alternative splicing</keyword>
<keyword id="KW-1267">Proteomics identification</keyword>
<keyword id="KW-1185">Reference proteome</keyword>
<keyword id="KW-0677">Repeat</keyword>
<keyword id="KW-0802">TPR repeat</keyword>
<accession>Q8NBP0</accession>
<accession>B1AQI1</accession>
<accession>B1AQI2</accession>
<accession>Q8IVP8</accession>
<accession>Q8NBI0</accession>
<accession>Q8ND20</accession>
<feature type="chain" id="PRO_0000106398" description="Tetratricopeptide repeat protein 13">
    <location>
        <begin position="1"/>
        <end position="860"/>
    </location>
</feature>
<feature type="repeat" description="TPR 1">
    <location>
        <begin position="143"/>
        <end position="176"/>
    </location>
</feature>
<feature type="repeat" description="TPR 2">
    <location>
        <begin position="216"/>
        <end position="248"/>
    </location>
</feature>
<feature type="repeat" description="TPR 3">
    <location>
        <begin position="249"/>
        <end position="282"/>
    </location>
</feature>
<feature type="repeat" description="TPR 4">
    <location>
        <begin position="284"/>
        <end position="316"/>
    </location>
</feature>
<feature type="repeat" description="TPR 5">
    <location>
        <begin position="317"/>
        <end position="350"/>
    </location>
</feature>
<feature type="repeat" description="TPR 6">
    <location>
        <begin position="352"/>
        <end position="384"/>
    </location>
</feature>
<feature type="repeat" description="TPR 7">
    <location>
        <begin position="386"/>
        <end position="418"/>
    </location>
</feature>
<feature type="splice variant" id="VSP_011644" description="In isoform 2." evidence="1 2 3">
    <location>
        <begin position="172"/>
        <end position="224"/>
    </location>
</feature>
<feature type="splice variant" id="VSP_035660" description="In isoform 2." evidence="1 2 3">
    <location>
        <position position="662"/>
    </location>
</feature>
<feature type="sequence conflict" description="In Ref. 1; BAC11700." evidence="4" ref="1">
    <original>G</original>
    <variation>R</variation>
    <location>
        <position position="38"/>
    </location>
</feature>
<feature type="sequence conflict" description="In Ref. 1; BAC11586." evidence="4" ref="1">
    <original>Y</original>
    <variation>H</variation>
    <location>
        <position position="438"/>
    </location>
</feature>
<protein>
    <recommendedName>
        <fullName>Tetratricopeptide repeat protein 13</fullName>
        <shortName>TPR repeat protein 13</shortName>
    </recommendedName>
</protein>
<dbReference type="EMBL" id="AK075386">
    <property type="protein sequence ID" value="BAC11586.1"/>
    <property type="molecule type" value="mRNA"/>
</dbReference>
<dbReference type="EMBL" id="AK075561">
    <property type="protein sequence ID" value="BAC11700.1"/>
    <property type="molecule type" value="mRNA"/>
</dbReference>
<dbReference type="EMBL" id="AL834453">
    <property type="protein sequence ID" value="CAD39113.1"/>
    <property type="molecule type" value="mRNA"/>
</dbReference>
<dbReference type="EMBL" id="AL844165">
    <property type="status" value="NOT_ANNOTATED_CDS"/>
    <property type="molecule type" value="Genomic_DNA"/>
</dbReference>
<dbReference type="EMBL" id="FO393421">
    <property type="status" value="NOT_ANNOTATED_CDS"/>
    <property type="molecule type" value="Genomic_DNA"/>
</dbReference>
<dbReference type="EMBL" id="BC042683">
    <property type="protein sequence ID" value="AAH42683.1"/>
    <property type="molecule type" value="mRNA"/>
</dbReference>
<dbReference type="CCDS" id="CCDS1588.1">
    <molecule id="Q8NBP0-1"/>
</dbReference>
<dbReference type="CCDS" id="CCDS44332.2">
    <molecule id="Q8NBP0-2"/>
</dbReference>
<dbReference type="RefSeq" id="NP_001116307.2">
    <molecule id="Q8NBP0-2"/>
    <property type="nucleotide sequence ID" value="NM_001122835.3"/>
</dbReference>
<dbReference type="RefSeq" id="NP_078801.3">
    <molecule id="Q8NBP0-1"/>
    <property type="nucleotide sequence ID" value="NM_024525.4"/>
</dbReference>
<dbReference type="SMR" id="Q8NBP0"/>
<dbReference type="BioGRID" id="122720">
    <property type="interactions" value="128"/>
</dbReference>
<dbReference type="FunCoup" id="Q8NBP0">
    <property type="interactions" value="1081"/>
</dbReference>
<dbReference type="IntAct" id="Q8NBP0">
    <property type="interactions" value="52"/>
</dbReference>
<dbReference type="MINT" id="Q8NBP0"/>
<dbReference type="STRING" id="9606.ENSP00000355621"/>
<dbReference type="iPTMnet" id="Q8NBP0"/>
<dbReference type="PhosphoSitePlus" id="Q8NBP0"/>
<dbReference type="SwissPalm" id="Q8NBP0"/>
<dbReference type="BioMuta" id="TTC13"/>
<dbReference type="DMDM" id="212276494"/>
<dbReference type="jPOST" id="Q8NBP0"/>
<dbReference type="MassIVE" id="Q8NBP0"/>
<dbReference type="PaxDb" id="9606-ENSP00000355621"/>
<dbReference type="PeptideAtlas" id="Q8NBP0"/>
<dbReference type="ProteomicsDB" id="72804">
    <molecule id="Q8NBP0-1"/>
</dbReference>
<dbReference type="ProteomicsDB" id="72805">
    <molecule id="Q8NBP0-2"/>
</dbReference>
<dbReference type="Pumba" id="Q8NBP0"/>
<dbReference type="Antibodypedia" id="2494">
    <property type="antibodies" value="62 antibodies from 13 providers"/>
</dbReference>
<dbReference type="DNASU" id="79573"/>
<dbReference type="Ensembl" id="ENST00000366661.9">
    <molecule id="Q8NBP0-1"/>
    <property type="protein sequence ID" value="ENSP00000355621.4"/>
    <property type="gene ID" value="ENSG00000143643.13"/>
</dbReference>
<dbReference type="Ensembl" id="ENST00000366662.8">
    <molecule id="Q8NBP0-2"/>
    <property type="protein sequence ID" value="ENSP00000355622.4"/>
    <property type="gene ID" value="ENSG00000143643.13"/>
</dbReference>
<dbReference type="GeneID" id="79573"/>
<dbReference type="KEGG" id="hsa:79573"/>
<dbReference type="MANE-Select" id="ENST00000366661.9">
    <property type="protein sequence ID" value="ENSP00000355621.4"/>
    <property type="RefSeq nucleotide sequence ID" value="NM_024525.5"/>
    <property type="RefSeq protein sequence ID" value="NP_078801.3"/>
</dbReference>
<dbReference type="UCSC" id="uc001huf.5">
    <molecule id="Q8NBP0-1"/>
    <property type="organism name" value="human"/>
</dbReference>
<dbReference type="AGR" id="HGNC:26204"/>
<dbReference type="CTD" id="79573"/>
<dbReference type="DisGeNET" id="79573"/>
<dbReference type="GeneCards" id="TTC13"/>
<dbReference type="HGNC" id="HGNC:26204">
    <property type="gene designation" value="TTC13"/>
</dbReference>
<dbReference type="HPA" id="ENSG00000143643">
    <property type="expression patterns" value="Low tissue specificity"/>
</dbReference>
<dbReference type="neXtProt" id="NX_Q8NBP0"/>
<dbReference type="OpenTargets" id="ENSG00000143643"/>
<dbReference type="PharmGKB" id="PA134931681"/>
<dbReference type="VEuPathDB" id="HostDB:ENSG00000143643"/>
<dbReference type="eggNOG" id="KOG4626">
    <property type="taxonomic scope" value="Eukaryota"/>
</dbReference>
<dbReference type="GeneTree" id="ENSGT00940000158461"/>
<dbReference type="HOGENOM" id="CLU_014101_1_0_1"/>
<dbReference type="InParanoid" id="Q8NBP0"/>
<dbReference type="OMA" id="KEMALYT"/>
<dbReference type="OrthoDB" id="1926212at2759"/>
<dbReference type="PAN-GO" id="Q8NBP0">
    <property type="GO annotations" value="0 GO annotations based on evolutionary models"/>
</dbReference>
<dbReference type="PhylomeDB" id="Q8NBP0"/>
<dbReference type="TreeFam" id="TF332283"/>
<dbReference type="PathwayCommons" id="Q8NBP0"/>
<dbReference type="SignaLink" id="Q8NBP0"/>
<dbReference type="BioGRID-ORCS" id="79573">
    <property type="hits" value="13 hits in 1156 CRISPR screens"/>
</dbReference>
<dbReference type="ChiTaRS" id="TTC13">
    <property type="organism name" value="human"/>
</dbReference>
<dbReference type="GenomeRNAi" id="79573"/>
<dbReference type="Pharos" id="Q8NBP0">
    <property type="development level" value="Tdark"/>
</dbReference>
<dbReference type="PRO" id="PR:Q8NBP0"/>
<dbReference type="Proteomes" id="UP000005640">
    <property type="component" value="Chromosome 1"/>
</dbReference>
<dbReference type="RNAct" id="Q8NBP0">
    <property type="molecule type" value="protein"/>
</dbReference>
<dbReference type="Bgee" id="ENSG00000143643">
    <property type="expression patterns" value="Expressed in granulocyte and 169 other cell types or tissues"/>
</dbReference>
<dbReference type="ExpressionAtlas" id="Q8NBP0">
    <property type="expression patterns" value="baseline and differential"/>
</dbReference>
<dbReference type="Gene3D" id="1.25.40.10">
    <property type="entry name" value="Tetratricopeptide repeat domain"/>
    <property type="match status" value="2"/>
</dbReference>
<dbReference type="InterPro" id="IPR011990">
    <property type="entry name" value="TPR-like_helical_dom_sf"/>
</dbReference>
<dbReference type="InterPro" id="IPR019734">
    <property type="entry name" value="TPR_rpt"/>
</dbReference>
<dbReference type="PANTHER" id="PTHR44523">
    <property type="entry name" value="TETRATRICOPEPTIDE REPEAT PROTEIN 13"/>
    <property type="match status" value="1"/>
</dbReference>
<dbReference type="PANTHER" id="PTHR44523:SF1">
    <property type="entry name" value="TETRATRICOPEPTIDE REPEAT PROTEIN 13"/>
    <property type="match status" value="1"/>
</dbReference>
<dbReference type="Pfam" id="PF00515">
    <property type="entry name" value="TPR_1"/>
    <property type="match status" value="1"/>
</dbReference>
<dbReference type="Pfam" id="PF13432">
    <property type="entry name" value="TPR_16"/>
    <property type="match status" value="1"/>
</dbReference>
<dbReference type="Pfam" id="PF13181">
    <property type="entry name" value="TPR_8"/>
    <property type="match status" value="1"/>
</dbReference>
<dbReference type="SMART" id="SM00028">
    <property type="entry name" value="TPR"/>
    <property type="match status" value="6"/>
</dbReference>
<dbReference type="SUPFAM" id="SSF48452">
    <property type="entry name" value="TPR-like"/>
    <property type="match status" value="2"/>
</dbReference>
<dbReference type="PROSITE" id="PS50005">
    <property type="entry name" value="TPR"/>
    <property type="match status" value="6"/>
</dbReference>
<dbReference type="PROSITE" id="PS50293">
    <property type="entry name" value="TPR_REGION"/>
    <property type="match status" value="1"/>
</dbReference>
<comment type="alternative products">
    <event type="alternative splicing"/>
    <isoform>
        <id>Q8NBP0-1</id>
        <name>1</name>
        <sequence type="displayed"/>
    </isoform>
    <isoform>
        <id>Q8NBP0-2</id>
        <name>2</name>
        <sequence type="described" ref="VSP_011644 VSP_035660"/>
    </isoform>
</comment>
<sequence>MAPAGCCCCCCFWGGAVAAAGAARRVLLLLLLGVLSAGLRPGALATEHYSPLSLLKQELQHRQQQEAPAGGGGCSPQSGDWGDQYSAECGESSFLNFHDSDCEPKGSSPCDSLLSLNTEKILSQAKSIAEQKRFPFATDNDSTNEELAIAYVLIGSGLYDEAIRHFSTMLQEEPDLVSAIYGRGIAYGKKGLHDIKNAELALFELSRVITLEPDRPEVFEQRAEILSPLGRINEAVNDLTKAIQLQPSARLYRHRGTLYFISEDYATAHEDFQQSLELNKNQPIAMLYKGLTFFHRGLLKEAIESFKEALKQKVDFIDAYKSLGQAYRELGNFEAATESFQKALLLNQNHVQTLQLRGMMLYHHGSLQEALKNFKRCLQLEPYNEVCQYMKGLSHVAMGQFYEGIKAQTKVMLNDPLPGQKASPEYLKVKYLREYSRYLHAHLDTPLTEYNIDVDLPGSFKDHWAKNLPFLIEDYEEQPGLQPHIKDVLHQNFESYKPEVQELICVADRLGSLMQYETPGFLPNKRIHRAMGLAALEVMQAVQRTWTNSKVRMNGKTRLMQWRDMFDIAVKWRRIADPDQPVLWLDQMPARSLSRGFNNHINLIRGQVINMRYLEYFEKILHFIKDRILVYHGANNPKGLLEVREALEKVHKVEDLLPIMKQFNTKTKDGFTVNTKVPSLKDQGKEYDGFTITITGDKVGNILFSVETQTTEERTQLYHAEIDALYKDLTAKGKVLILSSEFGEADAVCNLILSLVYYFYNLMPLSRGSSVIAYSVIVGALMASGKEVAGKIPKGKLVDFEAMTAPGSEAFSKVAKSWMNLKSISPSYKTLPSVSETFPTLRSMIEVLNTDSSPRCLKKL</sequence>